<feature type="chain" id="PRO_1000196257" description="Large ribosomal subunit protein bL9">
    <location>
        <begin position="1"/>
        <end position="146"/>
    </location>
</feature>
<proteinExistence type="inferred from homology"/>
<protein>
    <recommendedName>
        <fullName evidence="1">Large ribosomal subunit protein bL9</fullName>
    </recommendedName>
    <alternativeName>
        <fullName evidence="2">50S ribosomal protein L9</fullName>
    </alternativeName>
</protein>
<keyword id="KW-0687">Ribonucleoprotein</keyword>
<keyword id="KW-0689">Ribosomal protein</keyword>
<keyword id="KW-0694">RNA-binding</keyword>
<keyword id="KW-0699">rRNA-binding</keyword>
<organism>
    <name type="scientific">Nautilia profundicola (strain ATCC BAA-1463 / DSM 18972 / AmH)</name>
    <dbReference type="NCBI Taxonomy" id="598659"/>
    <lineage>
        <taxon>Bacteria</taxon>
        <taxon>Pseudomonadati</taxon>
        <taxon>Campylobacterota</taxon>
        <taxon>Epsilonproteobacteria</taxon>
        <taxon>Nautiliales</taxon>
        <taxon>Nautiliaceae</taxon>
        <taxon>Nautilia</taxon>
    </lineage>
</organism>
<reference key="1">
    <citation type="journal article" date="2009" name="PLoS Genet.">
        <title>Adaptations to submarine hydrothermal environments exemplified by the genome of Nautilia profundicola.</title>
        <authorList>
            <person name="Campbell B.J."/>
            <person name="Smith J.L."/>
            <person name="Hanson T.E."/>
            <person name="Klotz M.G."/>
            <person name="Stein L.Y."/>
            <person name="Lee C.K."/>
            <person name="Wu D."/>
            <person name="Robinson J.M."/>
            <person name="Khouri H.M."/>
            <person name="Eisen J.A."/>
            <person name="Cary S.C."/>
        </authorList>
    </citation>
    <scope>NUCLEOTIDE SEQUENCE [LARGE SCALE GENOMIC DNA]</scope>
    <source>
        <strain>ATCC BAA-1463 / DSM 18972 / AmH</strain>
    </source>
</reference>
<evidence type="ECO:0000255" key="1">
    <source>
        <dbReference type="HAMAP-Rule" id="MF_00503"/>
    </source>
</evidence>
<evidence type="ECO:0000305" key="2"/>
<dbReference type="EMBL" id="CP001279">
    <property type="protein sequence ID" value="ACM92334.1"/>
    <property type="molecule type" value="Genomic_DNA"/>
</dbReference>
<dbReference type="RefSeq" id="WP_012663706.1">
    <property type="nucleotide sequence ID" value="NC_012115.1"/>
</dbReference>
<dbReference type="SMR" id="B9L5M5"/>
<dbReference type="STRING" id="598659.NAMH_1270"/>
<dbReference type="KEGG" id="nam:NAMH_1270"/>
<dbReference type="eggNOG" id="COG0359">
    <property type="taxonomic scope" value="Bacteria"/>
</dbReference>
<dbReference type="HOGENOM" id="CLU_078938_3_0_7"/>
<dbReference type="OrthoDB" id="9788336at2"/>
<dbReference type="Proteomes" id="UP000000448">
    <property type="component" value="Chromosome"/>
</dbReference>
<dbReference type="GO" id="GO:1990904">
    <property type="term" value="C:ribonucleoprotein complex"/>
    <property type="evidence" value="ECO:0007669"/>
    <property type="project" value="UniProtKB-KW"/>
</dbReference>
<dbReference type="GO" id="GO:0005840">
    <property type="term" value="C:ribosome"/>
    <property type="evidence" value="ECO:0007669"/>
    <property type="project" value="UniProtKB-KW"/>
</dbReference>
<dbReference type="GO" id="GO:0019843">
    <property type="term" value="F:rRNA binding"/>
    <property type="evidence" value="ECO:0007669"/>
    <property type="project" value="UniProtKB-UniRule"/>
</dbReference>
<dbReference type="GO" id="GO:0003735">
    <property type="term" value="F:structural constituent of ribosome"/>
    <property type="evidence" value="ECO:0007669"/>
    <property type="project" value="InterPro"/>
</dbReference>
<dbReference type="GO" id="GO:0006412">
    <property type="term" value="P:translation"/>
    <property type="evidence" value="ECO:0007669"/>
    <property type="project" value="UniProtKB-UniRule"/>
</dbReference>
<dbReference type="FunFam" id="3.40.5.10:FF:000002">
    <property type="entry name" value="50S ribosomal protein L9"/>
    <property type="match status" value="1"/>
</dbReference>
<dbReference type="Gene3D" id="3.10.430.100">
    <property type="entry name" value="Ribosomal protein L9, C-terminal domain"/>
    <property type="match status" value="1"/>
</dbReference>
<dbReference type="Gene3D" id="3.40.5.10">
    <property type="entry name" value="Ribosomal protein L9, N-terminal domain"/>
    <property type="match status" value="1"/>
</dbReference>
<dbReference type="HAMAP" id="MF_00503">
    <property type="entry name" value="Ribosomal_bL9"/>
    <property type="match status" value="1"/>
</dbReference>
<dbReference type="InterPro" id="IPR000244">
    <property type="entry name" value="Ribosomal_bL9"/>
</dbReference>
<dbReference type="InterPro" id="IPR009027">
    <property type="entry name" value="Ribosomal_bL9/RNase_H1_N"/>
</dbReference>
<dbReference type="InterPro" id="IPR020594">
    <property type="entry name" value="Ribosomal_bL9_bac/chp"/>
</dbReference>
<dbReference type="InterPro" id="IPR020069">
    <property type="entry name" value="Ribosomal_bL9_C"/>
</dbReference>
<dbReference type="InterPro" id="IPR036791">
    <property type="entry name" value="Ribosomal_bL9_C_sf"/>
</dbReference>
<dbReference type="InterPro" id="IPR020070">
    <property type="entry name" value="Ribosomal_bL9_N"/>
</dbReference>
<dbReference type="InterPro" id="IPR036935">
    <property type="entry name" value="Ribosomal_bL9_N_sf"/>
</dbReference>
<dbReference type="NCBIfam" id="TIGR00158">
    <property type="entry name" value="L9"/>
    <property type="match status" value="1"/>
</dbReference>
<dbReference type="PANTHER" id="PTHR21368">
    <property type="entry name" value="50S RIBOSOMAL PROTEIN L9"/>
    <property type="match status" value="1"/>
</dbReference>
<dbReference type="Pfam" id="PF03948">
    <property type="entry name" value="Ribosomal_L9_C"/>
    <property type="match status" value="1"/>
</dbReference>
<dbReference type="Pfam" id="PF01281">
    <property type="entry name" value="Ribosomal_L9_N"/>
    <property type="match status" value="1"/>
</dbReference>
<dbReference type="SUPFAM" id="SSF55658">
    <property type="entry name" value="L9 N-domain-like"/>
    <property type="match status" value="1"/>
</dbReference>
<dbReference type="SUPFAM" id="SSF55653">
    <property type="entry name" value="Ribosomal protein L9 C-domain"/>
    <property type="match status" value="1"/>
</dbReference>
<dbReference type="PROSITE" id="PS00651">
    <property type="entry name" value="RIBOSOMAL_L9"/>
    <property type="match status" value="1"/>
</dbReference>
<accession>B9L5M5</accession>
<comment type="function">
    <text evidence="1">Binds to the 23S rRNA.</text>
</comment>
<comment type="similarity">
    <text evidence="1">Belongs to the bacterial ribosomal protein bL9 family.</text>
</comment>
<sequence>MKVLLIKDVKGLGKAGEIKNAKDGYARNFLIPKGFAKLATDDVIKEWQEEQKRKEEELKKELAELNELKEKIESVTLHIKHKLGANGQLYGAITNKEVAEHLKEHGIEIDKKHIDMKQIKTVGEYTVDVKLGHGIHAKLKIVVEGE</sequence>
<gene>
    <name evidence="1" type="primary">rplI</name>
    <name type="ordered locus">NAMH_1270</name>
</gene>
<name>RL9_NAUPA</name>